<proteinExistence type="inferred from homology"/>
<comment type="function">
    <text evidence="1">The RuvA-RuvB-RuvC complex processes Holliday junction (HJ) DNA during genetic recombination and DNA repair, while the RuvA-RuvB complex plays an important role in the rescue of blocked DNA replication forks via replication fork reversal (RFR). RuvA specifically binds to HJ cruciform DNA, conferring on it an open structure. The RuvB hexamer acts as an ATP-dependent pump, pulling dsDNA into and through the RuvAB complex. RuvB forms 2 homohexamers on either side of HJ DNA bound by 1 or 2 RuvA tetramers; 4 subunits per hexamer contact DNA at a time. Coordinated motions by a converter formed by DNA-disengaged RuvB subunits stimulates ATP hydrolysis and nucleotide exchange. Immobilization of the converter enables RuvB to convert the ATP-contained energy into a lever motion, pulling 2 nucleotides of DNA out of the RuvA tetramer per ATP hydrolyzed, thus driving DNA branch migration. The RuvB motors rotate together with the DNA substrate, which together with the progressing nucleotide cycle form the mechanistic basis for DNA recombination by continuous HJ branch migration. Branch migration allows RuvC to scan DNA until it finds its consensus sequence, where it cleaves and resolves cruciform DNA.</text>
</comment>
<comment type="catalytic activity">
    <reaction evidence="1">
        <text>ATP + H2O = ADP + phosphate + H(+)</text>
        <dbReference type="Rhea" id="RHEA:13065"/>
        <dbReference type="ChEBI" id="CHEBI:15377"/>
        <dbReference type="ChEBI" id="CHEBI:15378"/>
        <dbReference type="ChEBI" id="CHEBI:30616"/>
        <dbReference type="ChEBI" id="CHEBI:43474"/>
        <dbReference type="ChEBI" id="CHEBI:456216"/>
    </reaction>
</comment>
<comment type="subunit">
    <text evidence="1">Homohexamer. Forms an RuvA(8)-RuvB(12)-Holliday junction (HJ) complex. HJ DNA is sandwiched between 2 RuvA tetramers; dsDNA enters through RuvA and exits via RuvB. An RuvB hexamer assembles on each DNA strand where it exits the tetramer. Each RuvB hexamer is contacted by two RuvA subunits (via domain III) on 2 adjacent RuvB subunits; this complex drives branch migration. In the full resolvosome a probable DNA-RuvA(4)-RuvB(12)-RuvC(2) complex forms which resolves the HJ.</text>
</comment>
<comment type="subcellular location">
    <subcellularLocation>
        <location evidence="1">Cytoplasm</location>
    </subcellularLocation>
</comment>
<comment type="domain">
    <text evidence="1">Has 3 domains, the large (RuvB-L) and small ATPase (RuvB-S) domains and the C-terminal head (RuvB-H) domain. The head domain binds DNA, while the ATPase domains jointly bind ATP, ADP or are empty depending on the state of the subunit in the translocation cycle. During a single DNA translocation step the structure of each domain remains the same, but their relative positions change.</text>
</comment>
<comment type="similarity">
    <text evidence="1">Belongs to the RuvB family.</text>
</comment>
<gene>
    <name evidence="1" type="primary">ruvB</name>
    <name type="ordered locus">PP_1217</name>
</gene>
<accession>Q88NJ0</accession>
<sequence length="348" mass="38536">MIEADRLIAASGRDREEVQDRAIRPLSLDEYIGQPVVREQMALFIQAARGRGESLDHTLIFGPPGLGKTTLANIIAHEMGVSVKSTSGPILERPGDLAAMLTNLEPHDVLFIDEIHRLSPVVEEVLYPAMEDFQLDIMIGEGPAARSIKLDLPPFTLVGATTRAGMLTNPLRDRFGIVQRLEFYNDKDLSTIVSRSANILGLAIEDQGAYEIARRARGTPRIANRLLRRVRDYAEVRGKGQITKAVADMALNLLDVDERGFDHSDRRLLLTMIEKFDGGPVGVDNLAAAISEERHTIEDVLEPYLIQQGYIMRTPRGRVVTRHAYLHFGLNIPGRLGEGGDFSEPGDE</sequence>
<keyword id="KW-0067">ATP-binding</keyword>
<keyword id="KW-0963">Cytoplasm</keyword>
<keyword id="KW-0227">DNA damage</keyword>
<keyword id="KW-0233">DNA recombination</keyword>
<keyword id="KW-0234">DNA repair</keyword>
<keyword id="KW-0238">DNA-binding</keyword>
<keyword id="KW-0378">Hydrolase</keyword>
<keyword id="KW-0547">Nucleotide-binding</keyword>
<keyword id="KW-1185">Reference proteome</keyword>
<name>RUVB_PSEPK</name>
<feature type="chain" id="PRO_0000165579" description="Holliday junction branch migration complex subunit RuvB">
    <location>
        <begin position="1"/>
        <end position="348"/>
    </location>
</feature>
<feature type="region of interest" description="Large ATPase domain (RuvB-L)" evidence="1">
    <location>
        <begin position="4"/>
        <end position="184"/>
    </location>
</feature>
<feature type="region of interest" description="Small ATPAse domain (RuvB-S)" evidence="1">
    <location>
        <begin position="185"/>
        <end position="255"/>
    </location>
</feature>
<feature type="region of interest" description="Head domain (RuvB-H)" evidence="1">
    <location>
        <begin position="258"/>
        <end position="348"/>
    </location>
</feature>
<feature type="binding site" evidence="1">
    <location>
        <position position="23"/>
    </location>
    <ligand>
        <name>ATP</name>
        <dbReference type="ChEBI" id="CHEBI:30616"/>
    </ligand>
</feature>
<feature type="binding site" evidence="1">
    <location>
        <position position="24"/>
    </location>
    <ligand>
        <name>ATP</name>
        <dbReference type="ChEBI" id="CHEBI:30616"/>
    </ligand>
</feature>
<feature type="binding site" evidence="1">
    <location>
        <position position="65"/>
    </location>
    <ligand>
        <name>ATP</name>
        <dbReference type="ChEBI" id="CHEBI:30616"/>
    </ligand>
</feature>
<feature type="binding site" evidence="1">
    <location>
        <position position="68"/>
    </location>
    <ligand>
        <name>ATP</name>
        <dbReference type="ChEBI" id="CHEBI:30616"/>
    </ligand>
</feature>
<feature type="binding site" evidence="1">
    <location>
        <position position="69"/>
    </location>
    <ligand>
        <name>ATP</name>
        <dbReference type="ChEBI" id="CHEBI:30616"/>
    </ligand>
</feature>
<feature type="binding site" evidence="1">
    <location>
        <position position="69"/>
    </location>
    <ligand>
        <name>Mg(2+)</name>
        <dbReference type="ChEBI" id="CHEBI:18420"/>
    </ligand>
</feature>
<feature type="binding site" evidence="1">
    <location>
        <position position="70"/>
    </location>
    <ligand>
        <name>ATP</name>
        <dbReference type="ChEBI" id="CHEBI:30616"/>
    </ligand>
</feature>
<feature type="binding site" evidence="1">
    <location>
        <begin position="131"/>
        <end position="133"/>
    </location>
    <ligand>
        <name>ATP</name>
        <dbReference type="ChEBI" id="CHEBI:30616"/>
    </ligand>
</feature>
<feature type="binding site" evidence="1">
    <location>
        <position position="174"/>
    </location>
    <ligand>
        <name>ATP</name>
        <dbReference type="ChEBI" id="CHEBI:30616"/>
    </ligand>
</feature>
<feature type="binding site" evidence="1">
    <location>
        <position position="184"/>
    </location>
    <ligand>
        <name>ATP</name>
        <dbReference type="ChEBI" id="CHEBI:30616"/>
    </ligand>
</feature>
<feature type="binding site" evidence="1">
    <location>
        <position position="221"/>
    </location>
    <ligand>
        <name>ATP</name>
        <dbReference type="ChEBI" id="CHEBI:30616"/>
    </ligand>
</feature>
<feature type="binding site" evidence="1">
    <location>
        <position position="294"/>
    </location>
    <ligand>
        <name>DNA</name>
        <dbReference type="ChEBI" id="CHEBI:16991"/>
    </ligand>
</feature>
<feature type="binding site" evidence="1">
    <location>
        <position position="313"/>
    </location>
    <ligand>
        <name>DNA</name>
        <dbReference type="ChEBI" id="CHEBI:16991"/>
    </ligand>
</feature>
<feature type="binding site" evidence="1">
    <location>
        <position position="318"/>
    </location>
    <ligand>
        <name>DNA</name>
        <dbReference type="ChEBI" id="CHEBI:16991"/>
    </ligand>
</feature>
<protein>
    <recommendedName>
        <fullName evidence="1">Holliday junction branch migration complex subunit RuvB</fullName>
        <ecNumber evidence="1">3.6.4.-</ecNumber>
    </recommendedName>
</protein>
<organism>
    <name type="scientific">Pseudomonas putida (strain ATCC 47054 / DSM 6125 / CFBP 8728 / NCIMB 11950 / KT2440)</name>
    <dbReference type="NCBI Taxonomy" id="160488"/>
    <lineage>
        <taxon>Bacteria</taxon>
        <taxon>Pseudomonadati</taxon>
        <taxon>Pseudomonadota</taxon>
        <taxon>Gammaproteobacteria</taxon>
        <taxon>Pseudomonadales</taxon>
        <taxon>Pseudomonadaceae</taxon>
        <taxon>Pseudomonas</taxon>
    </lineage>
</organism>
<reference key="1">
    <citation type="journal article" date="2002" name="Environ. Microbiol.">
        <title>Complete genome sequence and comparative analysis of the metabolically versatile Pseudomonas putida KT2440.</title>
        <authorList>
            <person name="Nelson K.E."/>
            <person name="Weinel C."/>
            <person name="Paulsen I.T."/>
            <person name="Dodson R.J."/>
            <person name="Hilbert H."/>
            <person name="Martins dos Santos V.A.P."/>
            <person name="Fouts D.E."/>
            <person name="Gill S.R."/>
            <person name="Pop M."/>
            <person name="Holmes M."/>
            <person name="Brinkac L.M."/>
            <person name="Beanan M.J."/>
            <person name="DeBoy R.T."/>
            <person name="Daugherty S.C."/>
            <person name="Kolonay J.F."/>
            <person name="Madupu R."/>
            <person name="Nelson W.C."/>
            <person name="White O."/>
            <person name="Peterson J.D."/>
            <person name="Khouri H.M."/>
            <person name="Hance I."/>
            <person name="Chris Lee P."/>
            <person name="Holtzapple E.K."/>
            <person name="Scanlan D."/>
            <person name="Tran K."/>
            <person name="Moazzez A."/>
            <person name="Utterback T.R."/>
            <person name="Rizzo M."/>
            <person name="Lee K."/>
            <person name="Kosack D."/>
            <person name="Moestl D."/>
            <person name="Wedler H."/>
            <person name="Lauber J."/>
            <person name="Stjepandic D."/>
            <person name="Hoheisel J."/>
            <person name="Straetz M."/>
            <person name="Heim S."/>
            <person name="Kiewitz C."/>
            <person name="Eisen J.A."/>
            <person name="Timmis K.N."/>
            <person name="Duesterhoeft A."/>
            <person name="Tuemmler B."/>
            <person name="Fraser C.M."/>
        </authorList>
    </citation>
    <scope>NUCLEOTIDE SEQUENCE [LARGE SCALE GENOMIC DNA]</scope>
    <source>
        <strain>ATCC 47054 / DSM 6125 / CFBP 8728 / NCIMB 11950 / KT2440</strain>
    </source>
</reference>
<evidence type="ECO:0000255" key="1">
    <source>
        <dbReference type="HAMAP-Rule" id="MF_00016"/>
    </source>
</evidence>
<dbReference type="EC" id="3.6.4.-" evidence="1"/>
<dbReference type="EMBL" id="AE015451">
    <property type="protein sequence ID" value="AAN66841.1"/>
    <property type="molecule type" value="Genomic_DNA"/>
</dbReference>
<dbReference type="RefSeq" id="NP_743377.1">
    <property type="nucleotide sequence ID" value="NC_002947.4"/>
</dbReference>
<dbReference type="RefSeq" id="WP_003254766.1">
    <property type="nucleotide sequence ID" value="NZ_CP169744.1"/>
</dbReference>
<dbReference type="SMR" id="Q88NJ0"/>
<dbReference type="STRING" id="160488.PP_1217"/>
<dbReference type="PaxDb" id="160488-PP_1217"/>
<dbReference type="GeneID" id="83678583"/>
<dbReference type="KEGG" id="ppu:PP_1217"/>
<dbReference type="PATRIC" id="fig|160488.4.peg.1293"/>
<dbReference type="eggNOG" id="COG2255">
    <property type="taxonomic scope" value="Bacteria"/>
</dbReference>
<dbReference type="HOGENOM" id="CLU_055599_1_0_6"/>
<dbReference type="OrthoDB" id="9804478at2"/>
<dbReference type="PhylomeDB" id="Q88NJ0"/>
<dbReference type="BioCyc" id="PPUT160488:G1G01-1302-MONOMER"/>
<dbReference type="Proteomes" id="UP000000556">
    <property type="component" value="Chromosome"/>
</dbReference>
<dbReference type="GO" id="GO:0005737">
    <property type="term" value="C:cytoplasm"/>
    <property type="evidence" value="ECO:0007669"/>
    <property type="project" value="UniProtKB-SubCell"/>
</dbReference>
<dbReference type="GO" id="GO:0048476">
    <property type="term" value="C:Holliday junction resolvase complex"/>
    <property type="evidence" value="ECO:0007669"/>
    <property type="project" value="UniProtKB-UniRule"/>
</dbReference>
<dbReference type="GO" id="GO:0005524">
    <property type="term" value="F:ATP binding"/>
    <property type="evidence" value="ECO:0007669"/>
    <property type="project" value="UniProtKB-UniRule"/>
</dbReference>
<dbReference type="GO" id="GO:0016887">
    <property type="term" value="F:ATP hydrolysis activity"/>
    <property type="evidence" value="ECO:0007669"/>
    <property type="project" value="InterPro"/>
</dbReference>
<dbReference type="GO" id="GO:0000400">
    <property type="term" value="F:four-way junction DNA binding"/>
    <property type="evidence" value="ECO:0007669"/>
    <property type="project" value="UniProtKB-UniRule"/>
</dbReference>
<dbReference type="GO" id="GO:0009378">
    <property type="term" value="F:four-way junction helicase activity"/>
    <property type="evidence" value="ECO:0007669"/>
    <property type="project" value="InterPro"/>
</dbReference>
<dbReference type="GO" id="GO:0006310">
    <property type="term" value="P:DNA recombination"/>
    <property type="evidence" value="ECO:0007669"/>
    <property type="project" value="UniProtKB-UniRule"/>
</dbReference>
<dbReference type="GO" id="GO:0006281">
    <property type="term" value="P:DNA repair"/>
    <property type="evidence" value="ECO:0007669"/>
    <property type="project" value="UniProtKB-UniRule"/>
</dbReference>
<dbReference type="CDD" id="cd00009">
    <property type="entry name" value="AAA"/>
    <property type="match status" value="1"/>
</dbReference>
<dbReference type="FunFam" id="1.10.10.10:FF:000086">
    <property type="entry name" value="Holliday junction ATP-dependent DNA helicase RuvB"/>
    <property type="match status" value="1"/>
</dbReference>
<dbReference type="FunFam" id="1.10.8.60:FF:000023">
    <property type="entry name" value="Holliday junction ATP-dependent DNA helicase RuvB"/>
    <property type="match status" value="1"/>
</dbReference>
<dbReference type="FunFam" id="3.40.50.300:FF:000073">
    <property type="entry name" value="Holliday junction ATP-dependent DNA helicase RuvB"/>
    <property type="match status" value="1"/>
</dbReference>
<dbReference type="Gene3D" id="1.10.8.60">
    <property type="match status" value="1"/>
</dbReference>
<dbReference type="Gene3D" id="3.40.50.300">
    <property type="entry name" value="P-loop containing nucleotide triphosphate hydrolases"/>
    <property type="match status" value="1"/>
</dbReference>
<dbReference type="Gene3D" id="1.10.10.10">
    <property type="entry name" value="Winged helix-like DNA-binding domain superfamily/Winged helix DNA-binding domain"/>
    <property type="match status" value="1"/>
</dbReference>
<dbReference type="HAMAP" id="MF_00016">
    <property type="entry name" value="DNA_HJ_migration_RuvB"/>
    <property type="match status" value="1"/>
</dbReference>
<dbReference type="InterPro" id="IPR003593">
    <property type="entry name" value="AAA+_ATPase"/>
</dbReference>
<dbReference type="InterPro" id="IPR041445">
    <property type="entry name" value="AAA_lid_4"/>
</dbReference>
<dbReference type="InterPro" id="IPR004605">
    <property type="entry name" value="DNA_helicase_Holl-junc_RuvB"/>
</dbReference>
<dbReference type="InterPro" id="IPR027417">
    <property type="entry name" value="P-loop_NTPase"/>
</dbReference>
<dbReference type="InterPro" id="IPR008824">
    <property type="entry name" value="RuvB-like_N"/>
</dbReference>
<dbReference type="InterPro" id="IPR008823">
    <property type="entry name" value="RuvB_C"/>
</dbReference>
<dbReference type="InterPro" id="IPR036388">
    <property type="entry name" value="WH-like_DNA-bd_sf"/>
</dbReference>
<dbReference type="InterPro" id="IPR036390">
    <property type="entry name" value="WH_DNA-bd_sf"/>
</dbReference>
<dbReference type="NCBIfam" id="NF000868">
    <property type="entry name" value="PRK00080.1"/>
    <property type="match status" value="1"/>
</dbReference>
<dbReference type="NCBIfam" id="TIGR00635">
    <property type="entry name" value="ruvB"/>
    <property type="match status" value="1"/>
</dbReference>
<dbReference type="PANTHER" id="PTHR42848">
    <property type="match status" value="1"/>
</dbReference>
<dbReference type="PANTHER" id="PTHR42848:SF1">
    <property type="entry name" value="HOLLIDAY JUNCTION BRANCH MIGRATION COMPLEX SUBUNIT RUVB"/>
    <property type="match status" value="1"/>
</dbReference>
<dbReference type="Pfam" id="PF17864">
    <property type="entry name" value="AAA_lid_4"/>
    <property type="match status" value="1"/>
</dbReference>
<dbReference type="Pfam" id="PF05491">
    <property type="entry name" value="RuvB_C"/>
    <property type="match status" value="1"/>
</dbReference>
<dbReference type="Pfam" id="PF05496">
    <property type="entry name" value="RuvB_N"/>
    <property type="match status" value="1"/>
</dbReference>
<dbReference type="SMART" id="SM00382">
    <property type="entry name" value="AAA"/>
    <property type="match status" value="1"/>
</dbReference>
<dbReference type="SUPFAM" id="SSF52540">
    <property type="entry name" value="P-loop containing nucleoside triphosphate hydrolases"/>
    <property type="match status" value="1"/>
</dbReference>
<dbReference type="SUPFAM" id="SSF46785">
    <property type="entry name" value="Winged helix' DNA-binding domain"/>
    <property type="match status" value="1"/>
</dbReference>